<organism>
    <name type="scientific">Yersinia pestis bv. Antiqua (strain Angola)</name>
    <dbReference type="NCBI Taxonomy" id="349746"/>
    <lineage>
        <taxon>Bacteria</taxon>
        <taxon>Pseudomonadati</taxon>
        <taxon>Pseudomonadota</taxon>
        <taxon>Gammaproteobacteria</taxon>
        <taxon>Enterobacterales</taxon>
        <taxon>Yersiniaceae</taxon>
        <taxon>Yersinia</taxon>
    </lineage>
</organism>
<reference key="1">
    <citation type="journal article" date="2010" name="J. Bacteriol.">
        <title>Genome sequence of the deep-rooted Yersinia pestis strain Angola reveals new insights into the evolution and pangenome of the plague bacterium.</title>
        <authorList>
            <person name="Eppinger M."/>
            <person name="Worsham P.L."/>
            <person name="Nikolich M.P."/>
            <person name="Riley D.R."/>
            <person name="Sebastian Y."/>
            <person name="Mou S."/>
            <person name="Achtman M."/>
            <person name="Lindler L.E."/>
            <person name="Ravel J."/>
        </authorList>
    </citation>
    <scope>NUCLEOTIDE SEQUENCE [LARGE SCALE GENOMIC DNA]</scope>
    <source>
        <strain>Angola</strain>
    </source>
</reference>
<gene>
    <name evidence="1" type="primary">rpmH</name>
    <name type="ordered locus">YpAngola_A4178</name>
</gene>
<sequence>MKRTFQPSVLKRNRSHGFRARMATKNGRQVLARRRAKSRSRLTVSK</sequence>
<proteinExistence type="inferred from homology"/>
<protein>
    <recommendedName>
        <fullName evidence="1">Large ribosomal subunit protein bL34</fullName>
    </recommendedName>
    <alternativeName>
        <fullName evidence="3">50S ribosomal protein L34</fullName>
    </alternativeName>
</protein>
<keyword id="KW-0687">Ribonucleoprotein</keyword>
<keyword id="KW-0689">Ribosomal protein</keyword>
<evidence type="ECO:0000255" key="1">
    <source>
        <dbReference type="HAMAP-Rule" id="MF_00391"/>
    </source>
</evidence>
<evidence type="ECO:0000256" key="2">
    <source>
        <dbReference type="SAM" id="MobiDB-lite"/>
    </source>
</evidence>
<evidence type="ECO:0000305" key="3"/>
<feature type="chain" id="PRO_1000196148" description="Large ribosomal subunit protein bL34">
    <location>
        <begin position="1"/>
        <end position="46"/>
    </location>
</feature>
<feature type="region of interest" description="Disordered" evidence="2">
    <location>
        <begin position="26"/>
        <end position="46"/>
    </location>
</feature>
<feature type="compositionally biased region" description="Basic residues" evidence="2">
    <location>
        <begin position="31"/>
        <end position="40"/>
    </location>
</feature>
<dbReference type="EMBL" id="CP000901">
    <property type="protein sequence ID" value="ABX85633.1"/>
    <property type="molecule type" value="Genomic_DNA"/>
</dbReference>
<dbReference type="RefSeq" id="WP_002220736.1">
    <property type="nucleotide sequence ID" value="NZ_CP009935.1"/>
</dbReference>
<dbReference type="SMR" id="A9R5R6"/>
<dbReference type="GeneID" id="97458397"/>
<dbReference type="KEGG" id="ypg:YpAngola_A4178"/>
<dbReference type="PATRIC" id="fig|349746.12.peg.915"/>
<dbReference type="GO" id="GO:1990904">
    <property type="term" value="C:ribonucleoprotein complex"/>
    <property type="evidence" value="ECO:0007669"/>
    <property type="project" value="UniProtKB-KW"/>
</dbReference>
<dbReference type="GO" id="GO:0005840">
    <property type="term" value="C:ribosome"/>
    <property type="evidence" value="ECO:0007669"/>
    <property type="project" value="UniProtKB-KW"/>
</dbReference>
<dbReference type="GO" id="GO:0003735">
    <property type="term" value="F:structural constituent of ribosome"/>
    <property type="evidence" value="ECO:0007669"/>
    <property type="project" value="InterPro"/>
</dbReference>
<dbReference type="GO" id="GO:0006412">
    <property type="term" value="P:translation"/>
    <property type="evidence" value="ECO:0007669"/>
    <property type="project" value="UniProtKB-UniRule"/>
</dbReference>
<dbReference type="FunFam" id="1.10.287.3980:FF:000001">
    <property type="entry name" value="Mitochondrial ribosomal protein L34"/>
    <property type="match status" value="1"/>
</dbReference>
<dbReference type="Gene3D" id="1.10.287.3980">
    <property type="match status" value="1"/>
</dbReference>
<dbReference type="HAMAP" id="MF_00391">
    <property type="entry name" value="Ribosomal_bL34"/>
    <property type="match status" value="1"/>
</dbReference>
<dbReference type="InterPro" id="IPR000271">
    <property type="entry name" value="Ribosomal_bL34"/>
</dbReference>
<dbReference type="InterPro" id="IPR020939">
    <property type="entry name" value="Ribosomal_bL34_CS"/>
</dbReference>
<dbReference type="NCBIfam" id="TIGR01030">
    <property type="entry name" value="rpmH_bact"/>
    <property type="match status" value="1"/>
</dbReference>
<dbReference type="PANTHER" id="PTHR14503:SF4">
    <property type="entry name" value="LARGE RIBOSOMAL SUBUNIT PROTEIN BL34M"/>
    <property type="match status" value="1"/>
</dbReference>
<dbReference type="PANTHER" id="PTHR14503">
    <property type="entry name" value="MITOCHONDRIAL RIBOSOMAL PROTEIN 34 FAMILY MEMBER"/>
    <property type="match status" value="1"/>
</dbReference>
<dbReference type="Pfam" id="PF00468">
    <property type="entry name" value="Ribosomal_L34"/>
    <property type="match status" value="1"/>
</dbReference>
<dbReference type="PROSITE" id="PS00784">
    <property type="entry name" value="RIBOSOMAL_L34"/>
    <property type="match status" value="1"/>
</dbReference>
<accession>A9R5R6</accession>
<name>RL34_YERPG</name>
<comment type="similarity">
    <text evidence="1">Belongs to the bacterial ribosomal protein bL34 family.</text>
</comment>